<evidence type="ECO:0000255" key="1">
    <source>
        <dbReference type="HAMAP-Rule" id="MF_00636"/>
    </source>
</evidence>
<comment type="function">
    <text evidence="1">Displays ATPase and GTPase activities.</text>
</comment>
<comment type="similarity">
    <text evidence="1">Belongs to the RapZ-like family.</text>
</comment>
<keyword id="KW-0067">ATP-binding</keyword>
<keyword id="KW-0342">GTP-binding</keyword>
<keyword id="KW-0547">Nucleotide-binding</keyword>
<name>Y854_PSEPF</name>
<proteinExistence type="inferred from homology"/>
<sequence length="285" mass="32149">MRLIIVSGRSGSGKSTALDVLEDNGYYCIDNLPAGLLPELAERALIHTELAQPLVAVSIDARNLPSHLSRFPELLEDVRAKHIQCDVLYLDADEETLLKRFSETRRRHPLSNANRSLAEAIQDESALLGPIADLADLKINTTHLNLYQLRDTIKLRLLNQPEPGTAFLVESFGFKRGMPVDADLVFDVRCLPNPYWKPELRAQSGLDQPVAEYLAAQPEVEEMYQDIYTYLYKWLPRFAASNRAYVTIAIGCTGGHHRSVYLTERLGQALQKTLKNVQVRHRDLS</sequence>
<gene>
    <name type="ordered locus">Pfl01_0854</name>
</gene>
<dbReference type="EMBL" id="CP000094">
    <property type="protein sequence ID" value="ABA72597.1"/>
    <property type="molecule type" value="Genomic_DNA"/>
</dbReference>
<dbReference type="SMR" id="Q3KI09"/>
<dbReference type="KEGG" id="pfo:Pfl01_0854"/>
<dbReference type="eggNOG" id="COG1660">
    <property type="taxonomic scope" value="Bacteria"/>
</dbReference>
<dbReference type="HOGENOM" id="CLU_059558_1_1_6"/>
<dbReference type="Proteomes" id="UP000002704">
    <property type="component" value="Chromosome"/>
</dbReference>
<dbReference type="GO" id="GO:0005524">
    <property type="term" value="F:ATP binding"/>
    <property type="evidence" value="ECO:0007669"/>
    <property type="project" value="UniProtKB-UniRule"/>
</dbReference>
<dbReference type="GO" id="GO:0005525">
    <property type="term" value="F:GTP binding"/>
    <property type="evidence" value="ECO:0007669"/>
    <property type="project" value="UniProtKB-UniRule"/>
</dbReference>
<dbReference type="Gene3D" id="3.40.50.300">
    <property type="entry name" value="P-loop containing nucleotide triphosphate hydrolases"/>
    <property type="match status" value="1"/>
</dbReference>
<dbReference type="HAMAP" id="MF_00636">
    <property type="entry name" value="RapZ_like"/>
    <property type="match status" value="1"/>
</dbReference>
<dbReference type="InterPro" id="IPR027417">
    <property type="entry name" value="P-loop_NTPase"/>
</dbReference>
<dbReference type="InterPro" id="IPR005337">
    <property type="entry name" value="RapZ-like"/>
</dbReference>
<dbReference type="InterPro" id="IPR053930">
    <property type="entry name" value="RapZ-like_N"/>
</dbReference>
<dbReference type="InterPro" id="IPR053931">
    <property type="entry name" value="RapZ_C"/>
</dbReference>
<dbReference type="NCBIfam" id="NF003828">
    <property type="entry name" value="PRK05416.1"/>
    <property type="match status" value="1"/>
</dbReference>
<dbReference type="PANTHER" id="PTHR30448">
    <property type="entry name" value="RNASE ADAPTER PROTEIN RAPZ"/>
    <property type="match status" value="1"/>
</dbReference>
<dbReference type="PANTHER" id="PTHR30448:SF0">
    <property type="entry name" value="RNASE ADAPTER PROTEIN RAPZ"/>
    <property type="match status" value="1"/>
</dbReference>
<dbReference type="Pfam" id="PF22740">
    <property type="entry name" value="PapZ_C"/>
    <property type="match status" value="1"/>
</dbReference>
<dbReference type="Pfam" id="PF03668">
    <property type="entry name" value="RapZ-like_N"/>
    <property type="match status" value="1"/>
</dbReference>
<dbReference type="PIRSF" id="PIRSF005052">
    <property type="entry name" value="P-loopkin"/>
    <property type="match status" value="1"/>
</dbReference>
<dbReference type="SUPFAM" id="SSF52540">
    <property type="entry name" value="P-loop containing nucleoside triphosphate hydrolases"/>
    <property type="match status" value="1"/>
</dbReference>
<accession>Q3KI09</accession>
<feature type="chain" id="PRO_0000258982" description="Nucleotide-binding protein Pfl01_0854">
    <location>
        <begin position="1"/>
        <end position="285"/>
    </location>
</feature>
<feature type="binding site" evidence="1">
    <location>
        <begin position="8"/>
        <end position="15"/>
    </location>
    <ligand>
        <name>ATP</name>
        <dbReference type="ChEBI" id="CHEBI:30616"/>
    </ligand>
</feature>
<feature type="binding site" evidence="1">
    <location>
        <begin position="60"/>
        <end position="63"/>
    </location>
    <ligand>
        <name>GTP</name>
        <dbReference type="ChEBI" id="CHEBI:37565"/>
    </ligand>
</feature>
<protein>
    <recommendedName>
        <fullName evidence="1">Nucleotide-binding protein Pfl01_0854</fullName>
    </recommendedName>
</protein>
<reference key="1">
    <citation type="journal article" date="2009" name="Genome Biol.">
        <title>Genomic and genetic analyses of diversity and plant interactions of Pseudomonas fluorescens.</title>
        <authorList>
            <person name="Silby M.W."/>
            <person name="Cerdeno-Tarraga A.M."/>
            <person name="Vernikos G.S."/>
            <person name="Giddens S.R."/>
            <person name="Jackson R.W."/>
            <person name="Preston G.M."/>
            <person name="Zhang X.-X."/>
            <person name="Moon C.D."/>
            <person name="Gehrig S.M."/>
            <person name="Godfrey S.A.C."/>
            <person name="Knight C.G."/>
            <person name="Malone J.G."/>
            <person name="Robinson Z."/>
            <person name="Spiers A.J."/>
            <person name="Harris S."/>
            <person name="Challis G.L."/>
            <person name="Yaxley A.M."/>
            <person name="Harris D."/>
            <person name="Seeger K."/>
            <person name="Murphy L."/>
            <person name="Rutter S."/>
            <person name="Squares R."/>
            <person name="Quail M.A."/>
            <person name="Saunders E."/>
            <person name="Mavromatis K."/>
            <person name="Brettin T.S."/>
            <person name="Bentley S.D."/>
            <person name="Hothersall J."/>
            <person name="Stephens E."/>
            <person name="Thomas C.M."/>
            <person name="Parkhill J."/>
            <person name="Levy S.B."/>
            <person name="Rainey P.B."/>
            <person name="Thomson N.R."/>
        </authorList>
    </citation>
    <scope>NUCLEOTIDE SEQUENCE [LARGE SCALE GENOMIC DNA]</scope>
    <source>
        <strain>Pf0-1</strain>
    </source>
</reference>
<organism>
    <name type="scientific">Pseudomonas fluorescens (strain Pf0-1)</name>
    <dbReference type="NCBI Taxonomy" id="205922"/>
    <lineage>
        <taxon>Bacteria</taxon>
        <taxon>Pseudomonadati</taxon>
        <taxon>Pseudomonadota</taxon>
        <taxon>Gammaproteobacteria</taxon>
        <taxon>Pseudomonadales</taxon>
        <taxon>Pseudomonadaceae</taxon>
        <taxon>Pseudomonas</taxon>
    </lineage>
</organism>